<keyword id="KW-0378">Hydrolase</keyword>
<keyword id="KW-0645">Protease</keyword>
<keyword id="KW-1185">Reference proteome</keyword>
<keyword id="KW-0788">Thiol protease</keyword>
<keyword id="KW-0833">Ubl conjugation pathway</keyword>
<dbReference type="EC" id="3.4.19.12" evidence="4"/>
<dbReference type="EMBL" id="JQ013443">
    <property type="protein sequence ID" value="AFS88946.1"/>
    <property type="molecule type" value="mRNA"/>
</dbReference>
<dbReference type="EMBL" id="AC012561">
    <property type="protein sequence ID" value="AAF87868.1"/>
    <property type="molecule type" value="Genomic_DNA"/>
</dbReference>
<dbReference type="EMBL" id="AC079279">
    <property type="protein sequence ID" value="AAG51183.1"/>
    <property type="molecule type" value="Genomic_DNA"/>
</dbReference>
<dbReference type="EMBL" id="CP002684">
    <property type="protein sequence ID" value="AEE32577.1"/>
    <property type="molecule type" value="Genomic_DNA"/>
</dbReference>
<dbReference type="EMBL" id="CP002684">
    <property type="protein sequence ID" value="ANM58781.1"/>
    <property type="molecule type" value="Genomic_DNA"/>
</dbReference>
<dbReference type="EMBL" id="CP002684">
    <property type="protein sequence ID" value="ANM58782.1"/>
    <property type="molecule type" value="Genomic_DNA"/>
</dbReference>
<dbReference type="EMBL" id="BT002977">
    <property type="protein sequence ID" value="AAO22786.1"/>
    <property type="molecule type" value="mRNA"/>
</dbReference>
<dbReference type="EMBL" id="BT004408">
    <property type="protein sequence ID" value="AAO42402.1"/>
    <property type="molecule type" value="mRNA"/>
</dbReference>
<dbReference type="PIR" id="D96543">
    <property type="entry name" value="D96543"/>
</dbReference>
<dbReference type="RefSeq" id="NP_001321194.1">
    <property type="nucleotide sequence ID" value="NM_001333447.1"/>
</dbReference>
<dbReference type="RefSeq" id="NP_001321195.1">
    <property type="nucleotide sequence ID" value="NM_001333448.1"/>
</dbReference>
<dbReference type="RefSeq" id="NP_175482.1">
    <property type="nucleotide sequence ID" value="NM_103949.4"/>
</dbReference>
<dbReference type="SMR" id="Q9LPT6"/>
<dbReference type="FunCoup" id="Q9LPT6">
    <property type="interactions" value="2910"/>
</dbReference>
<dbReference type="IntAct" id="Q9LPT6">
    <property type="interactions" value="2"/>
</dbReference>
<dbReference type="STRING" id="3702.Q9LPT6"/>
<dbReference type="iPTMnet" id="Q9LPT6"/>
<dbReference type="PaxDb" id="3702-AT1G50670.1"/>
<dbReference type="ProteomicsDB" id="185854"/>
<dbReference type="DNASU" id="841489"/>
<dbReference type="EnsemblPlants" id="AT1G50670.1">
    <property type="protein sequence ID" value="AT1G50670.1"/>
    <property type="gene ID" value="AT1G50670"/>
</dbReference>
<dbReference type="EnsemblPlants" id="AT1G50670.2">
    <property type="protein sequence ID" value="AT1G50670.2"/>
    <property type="gene ID" value="AT1G50670"/>
</dbReference>
<dbReference type="EnsemblPlants" id="AT1G50670.3">
    <property type="protein sequence ID" value="AT1G50670.3"/>
    <property type="gene ID" value="AT1G50670"/>
</dbReference>
<dbReference type="GeneID" id="841489"/>
<dbReference type="Gramene" id="AT1G50670.1">
    <property type="protein sequence ID" value="AT1G50670.1"/>
    <property type="gene ID" value="AT1G50670"/>
</dbReference>
<dbReference type="Gramene" id="AT1G50670.2">
    <property type="protein sequence ID" value="AT1G50670.2"/>
    <property type="gene ID" value="AT1G50670"/>
</dbReference>
<dbReference type="Gramene" id="AT1G50670.3">
    <property type="protein sequence ID" value="AT1G50670.3"/>
    <property type="gene ID" value="AT1G50670"/>
</dbReference>
<dbReference type="KEGG" id="ath:AT1G50670"/>
<dbReference type="Araport" id="AT1G50670"/>
<dbReference type="TAIR" id="AT1G50670">
    <property type="gene designation" value="OTU2"/>
</dbReference>
<dbReference type="eggNOG" id="KOG3288">
    <property type="taxonomic scope" value="Eukaryota"/>
</dbReference>
<dbReference type="HOGENOM" id="CLU_108141_1_0_1"/>
<dbReference type="InParanoid" id="Q9LPT6"/>
<dbReference type="OMA" id="TRCILVY"/>
<dbReference type="OrthoDB" id="65596at2759"/>
<dbReference type="PhylomeDB" id="Q9LPT6"/>
<dbReference type="PRO" id="PR:Q9LPT6"/>
<dbReference type="Proteomes" id="UP000006548">
    <property type="component" value="Chromosome 1"/>
</dbReference>
<dbReference type="ExpressionAtlas" id="Q9LPT6">
    <property type="expression patterns" value="baseline and differential"/>
</dbReference>
<dbReference type="GO" id="GO:0005634">
    <property type="term" value="C:nucleus"/>
    <property type="evidence" value="ECO:0007005"/>
    <property type="project" value="TAIR"/>
</dbReference>
<dbReference type="GO" id="GO:0004843">
    <property type="term" value="F:cysteine-type deubiquitinase activity"/>
    <property type="evidence" value="ECO:0007669"/>
    <property type="project" value="UniProtKB-EC"/>
</dbReference>
<dbReference type="GO" id="GO:0006508">
    <property type="term" value="P:proteolysis"/>
    <property type="evidence" value="ECO:0007669"/>
    <property type="project" value="UniProtKB-KW"/>
</dbReference>
<dbReference type="CDD" id="cd22793">
    <property type="entry name" value="OTU_plant_OTU1_2-like"/>
    <property type="match status" value="1"/>
</dbReference>
<dbReference type="FunFam" id="3.90.70.80:FF:000017">
    <property type="entry name" value="ubiquitin thioesterase OTU1"/>
    <property type="match status" value="1"/>
</dbReference>
<dbReference type="Gene3D" id="3.90.70.80">
    <property type="match status" value="1"/>
</dbReference>
<dbReference type="InterPro" id="IPR003323">
    <property type="entry name" value="OTU_dom"/>
</dbReference>
<dbReference type="InterPro" id="IPR038765">
    <property type="entry name" value="Papain-like_cys_pep_sf"/>
</dbReference>
<dbReference type="PANTHER" id="PTHR13312">
    <property type="entry name" value="HIV-INDUCED PROTEIN-7-LIKE PROTEASE"/>
    <property type="match status" value="1"/>
</dbReference>
<dbReference type="PANTHER" id="PTHR13312:SF0">
    <property type="entry name" value="UBIQUITIN THIOESTERASE OTU1"/>
    <property type="match status" value="1"/>
</dbReference>
<dbReference type="Pfam" id="PF02338">
    <property type="entry name" value="OTU"/>
    <property type="match status" value="1"/>
</dbReference>
<dbReference type="Pfam" id="PF24560">
    <property type="entry name" value="zf-C2H2_OTU1_C"/>
    <property type="match status" value="1"/>
</dbReference>
<dbReference type="SUPFAM" id="SSF54001">
    <property type="entry name" value="Cysteine proteinases"/>
    <property type="match status" value="1"/>
</dbReference>
<dbReference type="PROSITE" id="PS50802">
    <property type="entry name" value="OTU"/>
    <property type="match status" value="1"/>
</dbReference>
<reference key="1">
    <citation type="journal article" date="2014" name="Front. Plant Sci.">
        <title>Distinct phylogenetic relationships and biochemical properties of Arabidopsis ovarian tumor-related deubiquitinases support their functional differentiation.</title>
        <authorList>
            <person name="Radjacommare R."/>
            <person name="Usharani R."/>
            <person name="Kuo C.-H."/>
            <person name="Fu H."/>
        </authorList>
    </citation>
    <scope>NUCLEOTIDE SEQUENCE [MRNA]</scope>
    <scope>FUNCTION</scope>
    <scope>MUTAGENESIS OF CYS-63; CYS-99; CYS-179 AND HIS-195</scope>
    <scope>CATALYTIC ACTIVITY</scope>
    <scope>GENE FAMILY</scope>
    <scope>NOMENCLATURE</scope>
    <source>
        <strain>cv. Columbia</strain>
    </source>
</reference>
<reference key="2">
    <citation type="journal article" date="2000" name="Nature">
        <title>Sequence and analysis of chromosome 1 of the plant Arabidopsis thaliana.</title>
        <authorList>
            <person name="Theologis A."/>
            <person name="Ecker J.R."/>
            <person name="Palm C.J."/>
            <person name="Federspiel N.A."/>
            <person name="Kaul S."/>
            <person name="White O."/>
            <person name="Alonso J."/>
            <person name="Altafi H."/>
            <person name="Araujo R."/>
            <person name="Bowman C.L."/>
            <person name="Brooks S.Y."/>
            <person name="Buehler E."/>
            <person name="Chan A."/>
            <person name="Chao Q."/>
            <person name="Chen H."/>
            <person name="Cheuk R.F."/>
            <person name="Chin C.W."/>
            <person name="Chung M.K."/>
            <person name="Conn L."/>
            <person name="Conway A.B."/>
            <person name="Conway A.R."/>
            <person name="Creasy T.H."/>
            <person name="Dewar K."/>
            <person name="Dunn P."/>
            <person name="Etgu P."/>
            <person name="Feldblyum T.V."/>
            <person name="Feng J.-D."/>
            <person name="Fong B."/>
            <person name="Fujii C.Y."/>
            <person name="Gill J.E."/>
            <person name="Goldsmith A.D."/>
            <person name="Haas B."/>
            <person name="Hansen N.F."/>
            <person name="Hughes B."/>
            <person name="Huizar L."/>
            <person name="Hunter J.L."/>
            <person name="Jenkins J."/>
            <person name="Johnson-Hopson C."/>
            <person name="Khan S."/>
            <person name="Khaykin E."/>
            <person name="Kim C.J."/>
            <person name="Koo H.L."/>
            <person name="Kremenetskaia I."/>
            <person name="Kurtz D.B."/>
            <person name="Kwan A."/>
            <person name="Lam B."/>
            <person name="Langin-Hooper S."/>
            <person name="Lee A."/>
            <person name="Lee J.M."/>
            <person name="Lenz C.A."/>
            <person name="Li J.H."/>
            <person name="Li Y.-P."/>
            <person name="Lin X."/>
            <person name="Liu S.X."/>
            <person name="Liu Z.A."/>
            <person name="Luros J.S."/>
            <person name="Maiti R."/>
            <person name="Marziali A."/>
            <person name="Militscher J."/>
            <person name="Miranda M."/>
            <person name="Nguyen M."/>
            <person name="Nierman W.C."/>
            <person name="Osborne B.I."/>
            <person name="Pai G."/>
            <person name="Peterson J."/>
            <person name="Pham P.K."/>
            <person name="Rizzo M."/>
            <person name="Rooney T."/>
            <person name="Rowley D."/>
            <person name="Sakano H."/>
            <person name="Salzberg S.L."/>
            <person name="Schwartz J.R."/>
            <person name="Shinn P."/>
            <person name="Southwick A.M."/>
            <person name="Sun H."/>
            <person name="Tallon L.J."/>
            <person name="Tambunga G."/>
            <person name="Toriumi M.J."/>
            <person name="Town C.D."/>
            <person name="Utterback T."/>
            <person name="Van Aken S."/>
            <person name="Vaysberg M."/>
            <person name="Vysotskaia V.S."/>
            <person name="Walker M."/>
            <person name="Wu D."/>
            <person name="Yu G."/>
            <person name="Fraser C.M."/>
            <person name="Venter J.C."/>
            <person name="Davis R.W."/>
        </authorList>
    </citation>
    <scope>NUCLEOTIDE SEQUENCE [LARGE SCALE GENOMIC DNA]</scope>
    <source>
        <strain>cv. Columbia</strain>
    </source>
</reference>
<reference key="3">
    <citation type="journal article" date="2017" name="Plant J.">
        <title>Araport11: a complete reannotation of the Arabidopsis thaliana reference genome.</title>
        <authorList>
            <person name="Cheng C.Y."/>
            <person name="Krishnakumar V."/>
            <person name="Chan A.P."/>
            <person name="Thibaud-Nissen F."/>
            <person name="Schobel S."/>
            <person name="Town C.D."/>
        </authorList>
    </citation>
    <scope>GENOME REANNOTATION</scope>
    <source>
        <strain>cv. Columbia</strain>
    </source>
</reference>
<reference key="4">
    <citation type="journal article" date="2003" name="Science">
        <title>Empirical analysis of transcriptional activity in the Arabidopsis genome.</title>
        <authorList>
            <person name="Yamada K."/>
            <person name="Lim J."/>
            <person name="Dale J.M."/>
            <person name="Chen H."/>
            <person name="Shinn P."/>
            <person name="Palm C.J."/>
            <person name="Southwick A.M."/>
            <person name="Wu H.C."/>
            <person name="Kim C.J."/>
            <person name="Nguyen M."/>
            <person name="Pham P.K."/>
            <person name="Cheuk R.F."/>
            <person name="Karlin-Newmann G."/>
            <person name="Liu S.X."/>
            <person name="Lam B."/>
            <person name="Sakano H."/>
            <person name="Wu T."/>
            <person name="Yu G."/>
            <person name="Miranda M."/>
            <person name="Quach H.L."/>
            <person name="Tripp M."/>
            <person name="Chang C.H."/>
            <person name="Lee J.M."/>
            <person name="Toriumi M.J."/>
            <person name="Chan M.M."/>
            <person name="Tang C.C."/>
            <person name="Onodera C.S."/>
            <person name="Deng J.M."/>
            <person name="Akiyama K."/>
            <person name="Ansari Y."/>
            <person name="Arakawa T."/>
            <person name="Banh J."/>
            <person name="Banno F."/>
            <person name="Bowser L."/>
            <person name="Brooks S.Y."/>
            <person name="Carninci P."/>
            <person name="Chao Q."/>
            <person name="Choy N."/>
            <person name="Enju A."/>
            <person name="Goldsmith A.D."/>
            <person name="Gurjal M."/>
            <person name="Hansen N.F."/>
            <person name="Hayashizaki Y."/>
            <person name="Johnson-Hopson C."/>
            <person name="Hsuan V.W."/>
            <person name="Iida K."/>
            <person name="Karnes M."/>
            <person name="Khan S."/>
            <person name="Koesema E."/>
            <person name="Ishida J."/>
            <person name="Jiang P.X."/>
            <person name="Jones T."/>
            <person name="Kawai J."/>
            <person name="Kamiya A."/>
            <person name="Meyers C."/>
            <person name="Nakajima M."/>
            <person name="Narusaka M."/>
            <person name="Seki M."/>
            <person name="Sakurai T."/>
            <person name="Satou M."/>
            <person name="Tamse R."/>
            <person name="Vaysberg M."/>
            <person name="Wallender E.K."/>
            <person name="Wong C."/>
            <person name="Yamamura Y."/>
            <person name="Yuan S."/>
            <person name="Shinozaki K."/>
            <person name="Davis R.W."/>
            <person name="Theologis A."/>
            <person name="Ecker J.R."/>
        </authorList>
    </citation>
    <scope>NUCLEOTIDE SEQUENCE [LARGE SCALE MRNA]</scope>
    <source>
        <strain>cv. Columbia</strain>
    </source>
</reference>
<reference evidence="9" key="5">
    <citation type="journal article" date="2012" name="Mol. Cell. Proteomics">
        <title>Comparative large-scale characterisation of plant vs. mammal proteins reveals similar and idiosyncratic N-alpha acetylation features.</title>
        <authorList>
            <person name="Bienvenut W.V."/>
            <person name="Sumpton D."/>
            <person name="Martinez A."/>
            <person name="Lilla S."/>
            <person name="Espagne C."/>
            <person name="Meinnel T."/>
            <person name="Giglione C."/>
        </authorList>
    </citation>
    <scope>IDENTIFICATION BY MASS SPECTROMETRY [LARGE SCALE ANALYSIS]</scope>
</reference>
<organism>
    <name type="scientific">Arabidopsis thaliana</name>
    <name type="common">Mouse-ear cress</name>
    <dbReference type="NCBI Taxonomy" id="3702"/>
    <lineage>
        <taxon>Eukaryota</taxon>
        <taxon>Viridiplantae</taxon>
        <taxon>Streptophyta</taxon>
        <taxon>Embryophyta</taxon>
        <taxon>Tracheophyta</taxon>
        <taxon>Spermatophyta</taxon>
        <taxon>Magnoliopsida</taxon>
        <taxon>eudicotyledons</taxon>
        <taxon>Gunneridae</taxon>
        <taxon>Pentapetalae</taxon>
        <taxon>rosids</taxon>
        <taxon>malvids</taxon>
        <taxon>Brassicales</taxon>
        <taxon>Brassicaceae</taxon>
        <taxon>Camelineae</taxon>
        <taxon>Arabidopsis</taxon>
    </lineage>
</organism>
<accession>Q9LPT6</accession>
<accession>A0A178W4L6</accession>
<proteinExistence type="evidence at protein level"/>
<protein>
    <recommendedName>
        <fullName evidence="5">OVARIAN TUMOR DOMAIN-containing deubiquitinating enzyme 2</fullName>
        <shortName evidence="5">OTU domain-containing protein 2</shortName>
        <ecNumber evidence="4">3.4.19.12</ecNumber>
    </recommendedName>
    <alternativeName>
        <fullName evidence="5">Deubiquitinating enzyme OTU2</fullName>
    </alternativeName>
</protein>
<feature type="chain" id="PRO_0000447753" description="OVARIAN TUMOR DOMAIN-containing deubiquitinating enzyme 2">
    <location>
        <begin position="1"/>
        <end position="208"/>
    </location>
</feature>
<feature type="domain" description="OTU" evidence="3">
    <location>
        <begin position="5"/>
        <end position="127"/>
    </location>
</feature>
<feature type="active site" evidence="1">
    <location>
        <position position="13"/>
    </location>
</feature>
<feature type="active site" description="Nucleophile" evidence="1">
    <location>
        <position position="16"/>
    </location>
</feature>
<feature type="active site" evidence="2">
    <location>
        <position position="120"/>
    </location>
</feature>
<feature type="active site" evidence="1">
    <location>
        <position position="201"/>
    </location>
</feature>
<feature type="mutagenesis site" description="Reduced'Lys-48'- and 'Lys-63'-linked ubiquitin (UB) chains. Abolished Lys-48- and Lys-63-linked UB chains; when associated with S-99." evidence="4">
    <original>C</original>
    <variation>S</variation>
    <location>
        <position position="63"/>
    </location>
</feature>
<feature type="mutagenesis site" description="Reduced'Lys-48'- and 'Lys-63'-linked ubiquitin (UB) chains. Abolished Lys-48- and Lys-63-linked UB chains; when associated with S-63." evidence="4">
    <original>C</original>
    <variation>S</variation>
    <location>
        <position position="99"/>
    </location>
</feature>
<feature type="mutagenesis site" description="Normal ubiquitin (UB) binding. Abolished'Lys-48'- and 'Lys-63'-linked UB chains; when associated with R-195." evidence="4">
    <original>C</original>
    <variation>S</variation>
    <location>
        <position position="179"/>
    </location>
</feature>
<feature type="mutagenesis site" description="Normal ubiquitin (UB) binding. Abolished'Lys-48'- and 'Lys-63'-linked UB chains; when associated with S-179." evidence="4">
    <original>H</original>
    <variation>R</variation>
    <location>
        <position position="195"/>
    </location>
</feature>
<evidence type="ECO:0000250" key="1">
    <source>
        <dbReference type="UniProtKB" id="Q96DC9"/>
    </source>
</evidence>
<evidence type="ECO:0000250" key="2">
    <source>
        <dbReference type="UniProtKB" id="Q96FW1"/>
    </source>
</evidence>
<evidence type="ECO:0000255" key="3">
    <source>
        <dbReference type="PROSITE-ProRule" id="PRU00139"/>
    </source>
</evidence>
<evidence type="ECO:0000269" key="4">
    <source>
    </source>
</evidence>
<evidence type="ECO:0000303" key="5">
    <source>
    </source>
</evidence>
<evidence type="ECO:0000305" key="6"/>
<evidence type="ECO:0000312" key="7">
    <source>
        <dbReference type="Araport" id="AT1G50670"/>
    </source>
</evidence>
<evidence type="ECO:0000312" key="8">
    <source>
        <dbReference type="EMBL" id="AAG51183.1"/>
    </source>
</evidence>
<evidence type="ECO:0007744" key="9">
    <source>
    </source>
</evidence>
<comment type="function">
    <text evidence="4">Hydrolase that can remove conjugated ubiquitin from proteins in vitro and may therefore play an important regulatory role at the level of protein turnover by preventing degradation (PubMed:24659992). Cysteine protease with a preference for 'Lys-63' and 'Lys-48' -linked ubiquitin (UB) tetramers as substrates (PubMed:24659992).</text>
</comment>
<comment type="catalytic activity">
    <reaction evidence="4">
        <text>Thiol-dependent hydrolysis of ester, thioester, amide, peptide and isopeptide bonds formed by the C-terminal Gly of ubiquitin (a 76-residue protein attached to proteins as an intracellular targeting signal).</text>
        <dbReference type="EC" id="3.4.19.12"/>
    </reaction>
</comment>
<comment type="interaction">
    <interactant intactId="EBI-20796120">
        <id>Q9LPT6</id>
    </interactant>
    <interactant intactId="EBI-632620">
        <id>O04492</id>
        <label>DRB1</label>
    </interactant>
    <organismsDiffer>false</organismsDiffer>
    <experiments>3</experiments>
</comment>
<comment type="similarity">
    <text evidence="6">Belongs to the peptidase C85 family.</text>
</comment>
<name>OTU2_ARATH</name>
<sequence>MEGIIVRRVIPSDNSCLFNAIGYVMDKDKNKAPELRQVIAAAVASNKEKYNEAFLGKLNEEYCAWILNPDKWGGAIELSILADYYGREIAAYDIQTSRCDLYGQTRNYDERVMLIYDGLHYDALALSPFEGAEEDFDMTIYPVGKDRSIGSIEGLALNLVKDQQRKRSYTDTANFTLRCGVCQIGVIGQKEAVEHAQATGHVNFQEYK</sequence>
<gene>
    <name evidence="5" type="primary">OTU2</name>
    <name evidence="7" type="ordered locus">At1g50670</name>
    <name evidence="8" type="ORF">F17J6.19</name>
</gene>